<protein>
    <recommendedName>
        <fullName evidence="1">Phosphomethylpyrimidine synthase</fullName>
        <ecNumber evidence="1">4.1.99.17</ecNumber>
    </recommendedName>
    <alternativeName>
        <fullName evidence="1">Hydroxymethylpyrimidine phosphate synthase</fullName>
        <shortName evidence="1">HMP-P synthase</shortName>
        <shortName evidence="1">HMP-phosphate synthase</shortName>
        <shortName evidence="1">HMPP synthase</shortName>
    </alternativeName>
    <alternativeName>
        <fullName evidence="1">Thiamine biosynthesis protein ThiC</fullName>
    </alternativeName>
</protein>
<proteinExistence type="inferred from homology"/>
<sequence>MSGASRSLKVDGKVLEGISRGPLPASRKVYVPGVLHPDLRVPLREISQTPTRLGHGPDAKETANPPVHVYDSSGPYTDPAAELDLRQGLPALRESWILGRNDTEALSGVSSEYGRAREADPRLAGLRFAHRRSPRVAKSGANVTQLHYARKGIITPEMEYVALRENLQVEASLAAQHPGQSWGAAIPRVITPEFVRDEIARGRAIIPANINHPELEPMIIGRNFLVKINANIGNSAVTSSIEEEVEKMVWSIRWGADTVMDLSTGRNIHETREWILRNAPVPIGTVPIYQALEKVGGKAEDLTWELYRDTLIEQCEQGVDYFTIHAGVLLRYVPWTAKRLTGIVSRGGSIMAKWCLAHHRENFLYTHFEEICEIMKAYDVSFSLGDGLRPGSIADANDAAQFGELETLGELTQIAWKHDVQVMIEGPGHVPMHLIQENMTKQLAVCGEAPFYTLGPLTTDIAPGYDHFTSGIGAAMIGWFGTAMLCYVTPKEHLGLPDRDDVKEGVITYKIAAHAADLAKGHPGAQARDNALSKARFEFRWEDQFNLSLDPERARAFHDETLPAEGAKVAHFCSMCGPQFCSMKITQEVRDFAAKQGVSDDTALQSALDEKSAEFKKAGSQLYR</sequence>
<gene>
    <name evidence="1" type="primary">thiC</name>
    <name type="ordered locus">MXAN_4235</name>
</gene>
<keyword id="KW-0004">4Fe-4S</keyword>
<keyword id="KW-0408">Iron</keyword>
<keyword id="KW-0411">Iron-sulfur</keyword>
<keyword id="KW-0456">Lyase</keyword>
<keyword id="KW-0479">Metal-binding</keyword>
<keyword id="KW-1185">Reference proteome</keyword>
<keyword id="KW-0949">S-adenosyl-L-methionine</keyword>
<keyword id="KW-0784">Thiamine biosynthesis</keyword>
<keyword id="KW-0862">Zinc</keyword>
<reference key="1">
    <citation type="journal article" date="2006" name="Proc. Natl. Acad. Sci. U.S.A.">
        <title>Evolution of sensory complexity recorded in a myxobacterial genome.</title>
        <authorList>
            <person name="Goldman B.S."/>
            <person name="Nierman W.C."/>
            <person name="Kaiser D."/>
            <person name="Slater S.C."/>
            <person name="Durkin A.S."/>
            <person name="Eisen J.A."/>
            <person name="Ronning C.M."/>
            <person name="Barbazuk W.B."/>
            <person name="Blanchard M."/>
            <person name="Field C."/>
            <person name="Halling C."/>
            <person name="Hinkle G."/>
            <person name="Iartchuk O."/>
            <person name="Kim H.S."/>
            <person name="Mackenzie C."/>
            <person name="Madupu R."/>
            <person name="Miller N."/>
            <person name="Shvartsbeyn A."/>
            <person name="Sullivan S.A."/>
            <person name="Vaudin M."/>
            <person name="Wiegand R."/>
            <person name="Kaplan H.B."/>
        </authorList>
    </citation>
    <scope>NUCLEOTIDE SEQUENCE [LARGE SCALE GENOMIC DNA]</scope>
    <source>
        <strain>DK1622</strain>
    </source>
</reference>
<organism>
    <name type="scientific">Myxococcus xanthus (strain DK1622)</name>
    <dbReference type="NCBI Taxonomy" id="246197"/>
    <lineage>
        <taxon>Bacteria</taxon>
        <taxon>Pseudomonadati</taxon>
        <taxon>Myxococcota</taxon>
        <taxon>Myxococcia</taxon>
        <taxon>Myxococcales</taxon>
        <taxon>Cystobacterineae</taxon>
        <taxon>Myxococcaceae</taxon>
        <taxon>Myxococcus</taxon>
    </lineage>
</organism>
<name>THIC_MYXXD</name>
<comment type="function">
    <text evidence="1">Catalyzes the synthesis of the hydroxymethylpyrimidine phosphate (HMP-P) moiety of thiamine from aminoimidazole ribotide (AIR) in a radical S-adenosyl-L-methionine (SAM)-dependent reaction.</text>
</comment>
<comment type="catalytic activity">
    <reaction evidence="1">
        <text>5-amino-1-(5-phospho-beta-D-ribosyl)imidazole + S-adenosyl-L-methionine = 4-amino-2-methyl-5-(phosphooxymethyl)pyrimidine + CO + 5'-deoxyadenosine + formate + L-methionine + 3 H(+)</text>
        <dbReference type="Rhea" id="RHEA:24840"/>
        <dbReference type="ChEBI" id="CHEBI:15378"/>
        <dbReference type="ChEBI" id="CHEBI:15740"/>
        <dbReference type="ChEBI" id="CHEBI:17245"/>
        <dbReference type="ChEBI" id="CHEBI:17319"/>
        <dbReference type="ChEBI" id="CHEBI:57844"/>
        <dbReference type="ChEBI" id="CHEBI:58354"/>
        <dbReference type="ChEBI" id="CHEBI:59789"/>
        <dbReference type="ChEBI" id="CHEBI:137981"/>
        <dbReference type="EC" id="4.1.99.17"/>
    </reaction>
</comment>
<comment type="cofactor">
    <cofactor evidence="1">
        <name>[4Fe-4S] cluster</name>
        <dbReference type="ChEBI" id="CHEBI:49883"/>
    </cofactor>
    <text evidence="1">Binds 1 [4Fe-4S] cluster per subunit. The cluster is coordinated with 3 cysteines and an exchangeable S-adenosyl-L-methionine.</text>
</comment>
<comment type="pathway">
    <text evidence="1">Cofactor biosynthesis; thiamine diphosphate biosynthesis.</text>
</comment>
<comment type="subunit">
    <text evidence="1">Homodimer.</text>
</comment>
<comment type="similarity">
    <text evidence="1">Belongs to the ThiC family.</text>
</comment>
<dbReference type="EC" id="4.1.99.17" evidence="1"/>
<dbReference type="EMBL" id="CP000113">
    <property type="protein sequence ID" value="ABF86660.1"/>
    <property type="molecule type" value="Genomic_DNA"/>
</dbReference>
<dbReference type="RefSeq" id="WP_011554238.1">
    <property type="nucleotide sequence ID" value="NC_008095.1"/>
</dbReference>
<dbReference type="SMR" id="Q1D4L3"/>
<dbReference type="STRING" id="246197.MXAN_4235"/>
<dbReference type="EnsemblBacteria" id="ABF86660">
    <property type="protein sequence ID" value="ABF86660"/>
    <property type="gene ID" value="MXAN_4235"/>
</dbReference>
<dbReference type="GeneID" id="41361552"/>
<dbReference type="KEGG" id="mxa:MXAN_4235"/>
<dbReference type="eggNOG" id="COG0422">
    <property type="taxonomic scope" value="Bacteria"/>
</dbReference>
<dbReference type="HOGENOM" id="CLU_013181_2_1_7"/>
<dbReference type="OrthoDB" id="9805897at2"/>
<dbReference type="UniPathway" id="UPA00060"/>
<dbReference type="Proteomes" id="UP000002402">
    <property type="component" value="Chromosome"/>
</dbReference>
<dbReference type="GO" id="GO:0005829">
    <property type="term" value="C:cytosol"/>
    <property type="evidence" value="ECO:0007669"/>
    <property type="project" value="TreeGrafter"/>
</dbReference>
<dbReference type="GO" id="GO:0051539">
    <property type="term" value="F:4 iron, 4 sulfur cluster binding"/>
    <property type="evidence" value="ECO:0007669"/>
    <property type="project" value="UniProtKB-KW"/>
</dbReference>
<dbReference type="GO" id="GO:0016830">
    <property type="term" value="F:carbon-carbon lyase activity"/>
    <property type="evidence" value="ECO:0007669"/>
    <property type="project" value="InterPro"/>
</dbReference>
<dbReference type="GO" id="GO:0008270">
    <property type="term" value="F:zinc ion binding"/>
    <property type="evidence" value="ECO:0007669"/>
    <property type="project" value="UniProtKB-UniRule"/>
</dbReference>
<dbReference type="GO" id="GO:0009228">
    <property type="term" value="P:thiamine biosynthetic process"/>
    <property type="evidence" value="ECO:0007669"/>
    <property type="project" value="UniProtKB-KW"/>
</dbReference>
<dbReference type="GO" id="GO:0009229">
    <property type="term" value="P:thiamine diphosphate biosynthetic process"/>
    <property type="evidence" value="ECO:0007669"/>
    <property type="project" value="UniProtKB-UniRule"/>
</dbReference>
<dbReference type="FunFam" id="3.20.20.540:FF:000001">
    <property type="entry name" value="Phosphomethylpyrimidine synthase"/>
    <property type="match status" value="1"/>
</dbReference>
<dbReference type="Gene3D" id="6.10.250.620">
    <property type="match status" value="1"/>
</dbReference>
<dbReference type="Gene3D" id="3.20.20.540">
    <property type="entry name" value="Radical SAM ThiC family, central domain"/>
    <property type="match status" value="1"/>
</dbReference>
<dbReference type="HAMAP" id="MF_00089">
    <property type="entry name" value="ThiC"/>
    <property type="match status" value="1"/>
</dbReference>
<dbReference type="InterPro" id="IPR037509">
    <property type="entry name" value="ThiC"/>
</dbReference>
<dbReference type="InterPro" id="IPR025747">
    <property type="entry name" value="ThiC-associated_dom"/>
</dbReference>
<dbReference type="InterPro" id="IPR038521">
    <property type="entry name" value="ThiC/Bza_core_dom"/>
</dbReference>
<dbReference type="InterPro" id="IPR002817">
    <property type="entry name" value="ThiC/BzaA/B"/>
</dbReference>
<dbReference type="NCBIfam" id="NF006763">
    <property type="entry name" value="PRK09284.1"/>
    <property type="match status" value="1"/>
</dbReference>
<dbReference type="NCBIfam" id="NF009895">
    <property type="entry name" value="PRK13352.1"/>
    <property type="match status" value="1"/>
</dbReference>
<dbReference type="NCBIfam" id="TIGR00190">
    <property type="entry name" value="thiC"/>
    <property type="match status" value="1"/>
</dbReference>
<dbReference type="PANTHER" id="PTHR30557:SF1">
    <property type="entry name" value="PHOSPHOMETHYLPYRIMIDINE SYNTHASE, CHLOROPLASTIC"/>
    <property type="match status" value="1"/>
</dbReference>
<dbReference type="PANTHER" id="PTHR30557">
    <property type="entry name" value="THIAMINE BIOSYNTHESIS PROTEIN THIC"/>
    <property type="match status" value="1"/>
</dbReference>
<dbReference type="Pfam" id="PF13667">
    <property type="entry name" value="ThiC-associated"/>
    <property type="match status" value="1"/>
</dbReference>
<dbReference type="Pfam" id="PF01964">
    <property type="entry name" value="ThiC_Rad_SAM"/>
    <property type="match status" value="1"/>
</dbReference>
<dbReference type="SFLD" id="SFLDF00407">
    <property type="entry name" value="phosphomethylpyrimidine_syntha"/>
    <property type="match status" value="1"/>
</dbReference>
<dbReference type="SFLD" id="SFLDG01114">
    <property type="entry name" value="phosphomethylpyrimidine_syntha"/>
    <property type="match status" value="1"/>
</dbReference>
<dbReference type="SFLD" id="SFLDS00113">
    <property type="entry name" value="Radical_SAM_Phosphomethylpyrim"/>
    <property type="match status" value="1"/>
</dbReference>
<accession>Q1D4L3</accession>
<evidence type="ECO:0000255" key="1">
    <source>
        <dbReference type="HAMAP-Rule" id="MF_00089"/>
    </source>
</evidence>
<feature type="chain" id="PRO_1000004780" description="Phosphomethylpyrimidine synthase">
    <location>
        <begin position="1"/>
        <end position="624"/>
    </location>
</feature>
<feature type="binding site" evidence="1">
    <location>
        <position position="231"/>
    </location>
    <ligand>
        <name>substrate</name>
    </ligand>
</feature>
<feature type="binding site" evidence="1">
    <location>
        <position position="260"/>
    </location>
    <ligand>
        <name>substrate</name>
    </ligand>
</feature>
<feature type="binding site" evidence="1">
    <location>
        <position position="289"/>
    </location>
    <ligand>
        <name>substrate</name>
    </ligand>
</feature>
<feature type="binding site" evidence="1">
    <location>
        <position position="325"/>
    </location>
    <ligand>
        <name>substrate</name>
    </ligand>
</feature>
<feature type="binding site" evidence="1">
    <location>
        <begin position="345"/>
        <end position="347"/>
    </location>
    <ligand>
        <name>substrate</name>
    </ligand>
</feature>
<feature type="binding site" evidence="1">
    <location>
        <begin position="386"/>
        <end position="389"/>
    </location>
    <ligand>
        <name>substrate</name>
    </ligand>
</feature>
<feature type="binding site" evidence="1">
    <location>
        <position position="425"/>
    </location>
    <ligand>
        <name>substrate</name>
    </ligand>
</feature>
<feature type="binding site" evidence="1">
    <location>
        <position position="429"/>
    </location>
    <ligand>
        <name>Zn(2+)</name>
        <dbReference type="ChEBI" id="CHEBI:29105"/>
    </ligand>
</feature>
<feature type="binding site" evidence="1">
    <location>
        <position position="452"/>
    </location>
    <ligand>
        <name>substrate</name>
    </ligand>
</feature>
<feature type="binding site" evidence="1">
    <location>
        <position position="493"/>
    </location>
    <ligand>
        <name>Zn(2+)</name>
        <dbReference type="ChEBI" id="CHEBI:29105"/>
    </ligand>
</feature>
<feature type="binding site" evidence="1">
    <location>
        <position position="573"/>
    </location>
    <ligand>
        <name>[4Fe-4S] cluster</name>
        <dbReference type="ChEBI" id="CHEBI:49883"/>
        <note>4Fe-4S-S-AdoMet</note>
    </ligand>
</feature>
<feature type="binding site" evidence="1">
    <location>
        <position position="576"/>
    </location>
    <ligand>
        <name>[4Fe-4S] cluster</name>
        <dbReference type="ChEBI" id="CHEBI:49883"/>
        <note>4Fe-4S-S-AdoMet</note>
    </ligand>
</feature>
<feature type="binding site" evidence="1">
    <location>
        <position position="581"/>
    </location>
    <ligand>
        <name>[4Fe-4S] cluster</name>
        <dbReference type="ChEBI" id="CHEBI:49883"/>
        <note>4Fe-4S-S-AdoMet</note>
    </ligand>
</feature>